<comment type="function">
    <text evidence="1">Plays a role in limiting the replication of viral DNA in keratinocytes. Recruits the host NCoR/SMRT complex to viral replication foci to mediate repression of both viral replication and transcription.</text>
</comment>
<comment type="subcellular location">
    <subcellularLocation>
        <location evidence="1">Host nucleus</location>
    </subcellularLocation>
</comment>
<comment type="similarity">
    <text evidence="3">Belongs to the papillomaviridae E8^E2C protein family.</text>
</comment>
<organismHost>
    <name type="scientific">Bos taurus</name>
    <name type="common">Bovine</name>
    <dbReference type="NCBI Taxonomy" id="9913"/>
</organismHost>
<accession>P0DOD7</accession>
<sequence>MKIFLQSSLPPGPNRRRGPQTRGHPRHKSASFRRSASSGSDTRDSRGRSRSPSSSRSRSRSRSRSPSGSHSRPRAPHVPDQETGRPPGGGGRRGSRDQQQGPGGPAPPSPGEVGTRSGPPETKAKGRLAELISAAYDPPVLLLQGCANTLKSFRRRTTQSYPHTFLCMSTSWTWASKTCTVKSGHRMLVAFVNSEQRTLFLATVKIPKGVTCLKGSFDGL</sequence>
<dbReference type="EMBL" id="AF486184">
    <property type="status" value="NOT_ANNOTATED_CDS"/>
    <property type="molecule type" value="Genomic_DNA"/>
</dbReference>
<dbReference type="EMBL" id="AJ620207">
    <property type="status" value="NOT_ANNOTATED_CDS"/>
    <property type="molecule type" value="Genomic_DNA"/>
</dbReference>
<dbReference type="SMR" id="P0DOD7"/>
<dbReference type="Proteomes" id="UP000006369">
    <property type="component" value="Genome"/>
</dbReference>
<dbReference type="Proteomes" id="UP000185274">
    <property type="component" value="Segment"/>
</dbReference>
<dbReference type="GO" id="GO:0042025">
    <property type="term" value="C:host cell nucleus"/>
    <property type="evidence" value="ECO:0007669"/>
    <property type="project" value="UniProtKB-SubCell"/>
</dbReference>
<dbReference type="GO" id="GO:0003677">
    <property type="term" value="F:DNA binding"/>
    <property type="evidence" value="ECO:0007669"/>
    <property type="project" value="InterPro"/>
</dbReference>
<dbReference type="GO" id="GO:0003700">
    <property type="term" value="F:DNA-binding transcription factor activity"/>
    <property type="evidence" value="ECO:0007669"/>
    <property type="project" value="InterPro"/>
</dbReference>
<dbReference type="GO" id="GO:0006275">
    <property type="term" value="P:regulation of DNA replication"/>
    <property type="evidence" value="ECO:0007669"/>
    <property type="project" value="InterPro"/>
</dbReference>
<dbReference type="Gene3D" id="3.30.70.330">
    <property type="match status" value="1"/>
</dbReference>
<dbReference type="InterPro" id="IPR035975">
    <property type="entry name" value="E2/EBNA1_C_sf"/>
</dbReference>
<dbReference type="InterPro" id="IPR012677">
    <property type="entry name" value="Nucleotide-bd_a/b_plait_sf"/>
</dbReference>
<dbReference type="InterPro" id="IPR000427">
    <property type="entry name" value="Papillomavirus_E2_C"/>
</dbReference>
<dbReference type="Pfam" id="PF00511">
    <property type="entry name" value="PPV_E2_C"/>
    <property type="match status" value="1"/>
</dbReference>
<dbReference type="SUPFAM" id="SSF54957">
    <property type="entry name" value="Viral DNA-binding domain"/>
    <property type="match status" value="1"/>
</dbReference>
<reference key="1">
    <citation type="journal article" date="2002" name="J. Virol.">
        <title>Lack of canonical E6 and E7 open reading frames in bird papillomaviruses: Fringilla coelebs papillomavirus and Psittacus erithacus timneh papillomavirus.</title>
        <authorList>
            <person name="Terai M."/>
            <person name="DeSalle R."/>
            <person name="Burk R.D."/>
        </authorList>
    </citation>
    <scope>NUCLEOTIDE SEQUENCE [GENOMIC DNA]</scope>
</reference>
<reference key="2">
    <citation type="submission" date="2004-01" db="EMBL/GenBank/DDBJ databases">
        <title>Sequencing of the complete genomes of BPV 3, BPV 5 and BPV 6.</title>
        <authorList>
            <person name="Delius H."/>
            <person name="de Villiers E.M."/>
        </authorList>
    </citation>
    <scope>NUCLEOTIDE SEQUENCE [GENOMIC DNA]</scope>
</reference>
<organism>
    <name type="scientific">Bovine papillomavirus type 3</name>
    <dbReference type="NCBI Taxonomy" id="2758957"/>
    <lineage>
        <taxon>Viruses</taxon>
        <taxon>Monodnaviria</taxon>
        <taxon>Shotokuvirae</taxon>
        <taxon>Cossaviricota</taxon>
        <taxon>Papovaviricetes</taxon>
        <taxon>Zurhausenvirales</taxon>
        <taxon>Papillomaviridae</taxon>
        <taxon>Firstpapillomavirinae</taxon>
        <taxon>Xipapillomavirus</taxon>
        <taxon>Xipapillomavirus 1</taxon>
    </lineage>
</organism>
<feature type="chain" id="PRO_0000438762" description="Protein E8^E2C">
    <location>
        <begin position="1"/>
        <end position="220"/>
    </location>
</feature>
<feature type="region of interest" description="Disordered" evidence="2">
    <location>
        <begin position="1"/>
        <end position="123"/>
    </location>
</feature>
<feature type="compositionally biased region" description="Basic residues" evidence="2">
    <location>
        <begin position="14"/>
        <end position="31"/>
    </location>
</feature>
<evidence type="ECO:0000250" key="1">
    <source>
        <dbReference type="UniProtKB" id="P0DKA0"/>
    </source>
</evidence>
<evidence type="ECO:0000256" key="2">
    <source>
        <dbReference type="SAM" id="MobiDB-lite"/>
    </source>
</evidence>
<evidence type="ECO:0000305" key="3"/>
<protein>
    <recommendedName>
        <fullName>Protein E8^E2C</fullName>
    </recommendedName>
</protein>
<proteinExistence type="inferred from homology"/>
<keyword id="KW-1048">Host nucleus</keyword>
<keyword id="KW-1185">Reference proteome</keyword>
<name>VE8E2_BPV3</name>